<protein>
    <recommendedName>
        <fullName>Extracellular metalloprotease GLRG_06511</fullName>
        <ecNumber>3.4.24.-</ecNumber>
    </recommendedName>
</protein>
<comment type="function">
    <text evidence="1">Secreted metalloproteinase that allows assimilation of proteinaceous substrates.</text>
</comment>
<comment type="subcellular location">
    <subcellularLocation>
        <location evidence="1">Secreted</location>
    </subcellularLocation>
</comment>
<comment type="similarity">
    <text evidence="4">Belongs to the peptidase M43B family.</text>
</comment>
<name>MEP2_COLGM</name>
<proteinExistence type="inferred from homology"/>
<sequence>MQFKSLLVSALAAASTALAQRSCGTPSPTEEQTEVAQRLQFNEENARVAGNATRLAPVTVNVYWHVIATSNSVSGGYLSQATLDKQLDVLNEAYAPHDIQFAQAGADWTINSNWASDRAELAMKRALRKGTYADLNVYFVPGTPYLGYAYFPTTVTTGSSAFYYDGVVILSDSVPGGSLSQYNLGHTATHEVGHWLGLYHTFEGYQCGGNGDYVSDTPFESEEAYGCEIGRDTCPSQAGDDPVTNYMDYSDDPCFTHFTTGQETRMHSYWTAYRASYQ</sequence>
<keyword id="KW-1015">Disulfide bond</keyword>
<keyword id="KW-0325">Glycoprotein</keyword>
<keyword id="KW-0378">Hydrolase</keyword>
<keyword id="KW-0479">Metal-binding</keyword>
<keyword id="KW-0482">Metalloprotease</keyword>
<keyword id="KW-0645">Protease</keyword>
<keyword id="KW-1185">Reference proteome</keyword>
<keyword id="KW-0964">Secreted</keyword>
<keyword id="KW-0732">Signal</keyword>
<keyword id="KW-0862">Zinc</keyword>
<organism>
    <name type="scientific">Colletotrichum graminicola (strain M1.001 / M2 / FGSC 10212)</name>
    <name type="common">Maize anthracnose fungus</name>
    <name type="synonym">Glomerella graminicola</name>
    <dbReference type="NCBI Taxonomy" id="645133"/>
    <lineage>
        <taxon>Eukaryota</taxon>
        <taxon>Fungi</taxon>
        <taxon>Dikarya</taxon>
        <taxon>Ascomycota</taxon>
        <taxon>Pezizomycotina</taxon>
        <taxon>Sordariomycetes</taxon>
        <taxon>Hypocreomycetidae</taxon>
        <taxon>Glomerellales</taxon>
        <taxon>Glomerellaceae</taxon>
        <taxon>Colletotrichum</taxon>
        <taxon>Colletotrichum graminicola species complex</taxon>
    </lineage>
</organism>
<gene>
    <name type="ORF">GLRG_06511</name>
</gene>
<reference key="1">
    <citation type="journal article" date="2012" name="Nat. Genet.">
        <title>Lifestyle transitions in plant pathogenic Colletotrichum fungi deciphered by genome and transcriptome analyses.</title>
        <authorList>
            <person name="O'Connell R.J."/>
            <person name="Thon M.R."/>
            <person name="Hacquard S."/>
            <person name="Amyotte S.G."/>
            <person name="Kleemann J."/>
            <person name="Torres M.F."/>
            <person name="Damm U."/>
            <person name="Buiate E.A."/>
            <person name="Epstein L."/>
            <person name="Alkan N."/>
            <person name="Altmueller J."/>
            <person name="Alvarado-Balderrama L."/>
            <person name="Bauser C.A."/>
            <person name="Becker C."/>
            <person name="Birren B.W."/>
            <person name="Chen Z."/>
            <person name="Choi J."/>
            <person name="Crouch J.A."/>
            <person name="Duvick J.P."/>
            <person name="Farman M.A."/>
            <person name="Gan P."/>
            <person name="Heiman D."/>
            <person name="Henrissat B."/>
            <person name="Howard R.J."/>
            <person name="Kabbage M."/>
            <person name="Koch C."/>
            <person name="Kracher B."/>
            <person name="Kubo Y."/>
            <person name="Law A.D."/>
            <person name="Lebrun M.-H."/>
            <person name="Lee Y.-H."/>
            <person name="Miyara I."/>
            <person name="Moore N."/>
            <person name="Neumann U."/>
            <person name="Nordstroem K."/>
            <person name="Panaccione D.G."/>
            <person name="Panstruga R."/>
            <person name="Place M."/>
            <person name="Proctor R.H."/>
            <person name="Prusky D."/>
            <person name="Rech G."/>
            <person name="Reinhardt R."/>
            <person name="Rollins J.A."/>
            <person name="Rounsley S."/>
            <person name="Schardl C.L."/>
            <person name="Schwartz D.C."/>
            <person name="Shenoy N."/>
            <person name="Shirasu K."/>
            <person name="Sikhakolli U.R."/>
            <person name="Stueber K."/>
            <person name="Sukno S.A."/>
            <person name="Sweigard J.A."/>
            <person name="Takano Y."/>
            <person name="Takahara H."/>
            <person name="Trail F."/>
            <person name="van der Does H.C."/>
            <person name="Voll L.M."/>
            <person name="Will I."/>
            <person name="Young S."/>
            <person name="Zeng Q."/>
            <person name="Zhang J."/>
            <person name="Zhou S."/>
            <person name="Dickman M.B."/>
            <person name="Schulze-Lefert P."/>
            <person name="Ver Loren van Themaat E."/>
            <person name="Ma L.-J."/>
            <person name="Vaillancourt L.J."/>
        </authorList>
    </citation>
    <scope>NUCLEOTIDE SEQUENCE [LARGE SCALE GENOMIC DNA]</scope>
    <source>
        <strain>M1.001 / M2 / FGSC 10212</strain>
    </source>
</reference>
<evidence type="ECO:0000250" key="1"/>
<evidence type="ECO:0000255" key="2"/>
<evidence type="ECO:0000255" key="3">
    <source>
        <dbReference type="PROSITE-ProRule" id="PRU10095"/>
    </source>
</evidence>
<evidence type="ECO:0000305" key="4"/>
<feature type="signal peptide" evidence="2">
    <location>
        <begin position="1"/>
        <end position="19"/>
    </location>
</feature>
<feature type="chain" id="PRO_0000407208" description="Extracellular metalloprotease GLRG_06511">
    <location>
        <begin position="20"/>
        <end position="278"/>
    </location>
</feature>
<feature type="active site" evidence="3">
    <location>
        <position position="191"/>
    </location>
</feature>
<feature type="binding site" evidence="3">
    <location>
        <position position="190"/>
    </location>
    <ligand>
        <name>Zn(2+)</name>
        <dbReference type="ChEBI" id="CHEBI:29105"/>
        <note>catalytic</note>
    </ligand>
</feature>
<feature type="binding site" evidence="3">
    <location>
        <position position="194"/>
    </location>
    <ligand>
        <name>Zn(2+)</name>
        <dbReference type="ChEBI" id="CHEBI:29105"/>
        <note>catalytic</note>
    </ligand>
</feature>
<feature type="glycosylation site" description="N-linked (GlcNAc...) asparagine" evidence="2">
    <location>
        <position position="51"/>
    </location>
</feature>
<feature type="disulfide bond" evidence="1">
    <location>
        <begin position="227"/>
        <end position="254"/>
    </location>
</feature>
<accession>E3QKH9</accession>
<dbReference type="EC" id="3.4.24.-"/>
<dbReference type="EMBL" id="GG697355">
    <property type="protein sequence ID" value="EFQ31367.1"/>
    <property type="molecule type" value="Genomic_DNA"/>
</dbReference>
<dbReference type="RefSeq" id="XP_008095387.1">
    <property type="nucleotide sequence ID" value="XM_008097196.1"/>
</dbReference>
<dbReference type="SMR" id="E3QKH9"/>
<dbReference type="STRING" id="645133.E3QKH9"/>
<dbReference type="EnsemblFungi" id="EFQ31367">
    <property type="protein sequence ID" value="EFQ31367"/>
    <property type="gene ID" value="GLRG_06511"/>
</dbReference>
<dbReference type="GeneID" id="24411876"/>
<dbReference type="VEuPathDB" id="FungiDB:GLRG_06511"/>
<dbReference type="eggNOG" id="ENOG502RYKG">
    <property type="taxonomic scope" value="Eukaryota"/>
</dbReference>
<dbReference type="HOGENOM" id="CLU_048726_0_0_1"/>
<dbReference type="OrthoDB" id="536211at2759"/>
<dbReference type="Proteomes" id="UP000008782">
    <property type="component" value="Unassembled WGS sequence"/>
</dbReference>
<dbReference type="GO" id="GO:0005576">
    <property type="term" value="C:extracellular region"/>
    <property type="evidence" value="ECO:0007669"/>
    <property type="project" value="UniProtKB-SubCell"/>
</dbReference>
<dbReference type="GO" id="GO:0046872">
    <property type="term" value="F:metal ion binding"/>
    <property type="evidence" value="ECO:0007669"/>
    <property type="project" value="UniProtKB-KW"/>
</dbReference>
<dbReference type="GO" id="GO:0008237">
    <property type="term" value="F:metallopeptidase activity"/>
    <property type="evidence" value="ECO:0007669"/>
    <property type="project" value="UniProtKB-KW"/>
</dbReference>
<dbReference type="GO" id="GO:0006508">
    <property type="term" value="P:proteolysis"/>
    <property type="evidence" value="ECO:0007669"/>
    <property type="project" value="UniProtKB-KW"/>
</dbReference>
<dbReference type="CDD" id="cd04275">
    <property type="entry name" value="ZnMc_pappalysin_like"/>
    <property type="match status" value="1"/>
</dbReference>
<dbReference type="Gene3D" id="3.40.390.10">
    <property type="entry name" value="Collagenase (Catalytic Domain)"/>
    <property type="match status" value="1"/>
</dbReference>
<dbReference type="InterPro" id="IPR024079">
    <property type="entry name" value="MetalloPept_cat_dom_sf"/>
</dbReference>
<dbReference type="InterPro" id="IPR008754">
    <property type="entry name" value="Peptidase_M43"/>
</dbReference>
<dbReference type="PANTHER" id="PTHR47466">
    <property type="match status" value="1"/>
</dbReference>
<dbReference type="PANTHER" id="PTHR47466:SF1">
    <property type="entry name" value="METALLOPROTEASE MEP1 (AFU_ORTHOLOGUE AFUA_1G07730)-RELATED"/>
    <property type="match status" value="1"/>
</dbReference>
<dbReference type="Pfam" id="PF05572">
    <property type="entry name" value="Peptidase_M43"/>
    <property type="match status" value="1"/>
</dbReference>
<dbReference type="SUPFAM" id="SSF55486">
    <property type="entry name" value="Metalloproteases ('zincins'), catalytic domain"/>
    <property type="match status" value="1"/>
</dbReference>
<dbReference type="PROSITE" id="PS00142">
    <property type="entry name" value="ZINC_PROTEASE"/>
    <property type="match status" value="1"/>
</dbReference>